<accession>P30795</accession>
<accession>Q5NN44</accession>
<dbReference type="EMBL" id="L09649">
    <property type="protein sequence ID" value="AAA71931.1"/>
    <property type="molecule type" value="Genomic_DNA"/>
</dbReference>
<dbReference type="EMBL" id="L09651">
    <property type="protein sequence ID" value="AAA71936.1"/>
    <property type="molecule type" value="Unassigned_DNA"/>
</dbReference>
<dbReference type="EMBL" id="AE008692">
    <property type="protein sequence ID" value="AAV89866.1"/>
    <property type="molecule type" value="Genomic_DNA"/>
</dbReference>
<dbReference type="PIR" id="B40649">
    <property type="entry name" value="B40649"/>
</dbReference>
<dbReference type="RefSeq" id="WP_011241055.1">
    <property type="nucleotide sequence ID" value="NZ_CP035711.1"/>
</dbReference>
<dbReference type="SMR" id="P30795"/>
<dbReference type="STRING" id="264203.ZMO1242"/>
<dbReference type="KEGG" id="zmo:ZMO1242"/>
<dbReference type="eggNOG" id="COG2866">
    <property type="taxonomic scope" value="Bacteria"/>
</dbReference>
<dbReference type="HOGENOM" id="CLU_042358_0_0_5"/>
<dbReference type="Proteomes" id="UP000001173">
    <property type="component" value="Chromosome"/>
</dbReference>
<dbReference type="GO" id="GO:0004181">
    <property type="term" value="F:metallocarboxypeptidase activity"/>
    <property type="evidence" value="ECO:0007669"/>
    <property type="project" value="InterPro"/>
</dbReference>
<dbReference type="GO" id="GO:0008270">
    <property type="term" value="F:zinc ion binding"/>
    <property type="evidence" value="ECO:0007669"/>
    <property type="project" value="InterPro"/>
</dbReference>
<dbReference type="GO" id="GO:0006508">
    <property type="term" value="P:proteolysis"/>
    <property type="evidence" value="ECO:0007669"/>
    <property type="project" value="InterPro"/>
</dbReference>
<dbReference type="CDD" id="cd06234">
    <property type="entry name" value="M14_PaCCP-like"/>
    <property type="match status" value="1"/>
</dbReference>
<dbReference type="Gene3D" id="2.60.40.3120">
    <property type="match status" value="1"/>
</dbReference>
<dbReference type="Gene3D" id="3.40.630.10">
    <property type="entry name" value="Zn peptidases"/>
    <property type="match status" value="1"/>
</dbReference>
<dbReference type="InterPro" id="IPR050821">
    <property type="entry name" value="Cytosolic_carboxypeptidase"/>
</dbReference>
<dbReference type="InterPro" id="IPR040626">
    <property type="entry name" value="Pepdidase_M14_N"/>
</dbReference>
<dbReference type="InterPro" id="IPR000834">
    <property type="entry name" value="Peptidase_M14"/>
</dbReference>
<dbReference type="PANTHER" id="PTHR12756">
    <property type="entry name" value="CYTOSOLIC CARBOXYPEPTIDASE"/>
    <property type="match status" value="1"/>
</dbReference>
<dbReference type="PANTHER" id="PTHR12756:SF11">
    <property type="entry name" value="CYTOSOLIC CARBOXYPEPTIDASE 1"/>
    <property type="match status" value="1"/>
</dbReference>
<dbReference type="Pfam" id="PF18027">
    <property type="entry name" value="Pepdidase_M14_N"/>
    <property type="match status" value="1"/>
</dbReference>
<dbReference type="Pfam" id="PF00246">
    <property type="entry name" value="Peptidase_M14"/>
    <property type="match status" value="1"/>
</dbReference>
<dbReference type="SUPFAM" id="SSF53187">
    <property type="entry name" value="Zn-dependent exopeptidases"/>
    <property type="match status" value="1"/>
</dbReference>
<dbReference type="PROSITE" id="PS52035">
    <property type="entry name" value="PEPTIDASE_M14"/>
    <property type="match status" value="1"/>
</dbReference>
<keyword id="KW-1185">Reference proteome</keyword>
<gene>
    <name type="ordered locus">ZMO1242</name>
    <name type="ORF">zm2</name>
</gene>
<sequence>MTLQINAAFDGGNIHVVEQDGNRIYLEIIKDNQSDFFQWFYFKVTGAKDQALELVVTNASDSAYPAGWPDYQARVSEDRQDWQMTETDYRDGMLTIRYTPRSNIAYFAYFAPYSMERHHDLIARMAGKSGVGYEMLGKSLDGQSMDCLTMGEGRRSIWLIARQHPGETMAEWWMEGALERLTDENDSVARLLRQKARFHIMPNMNPDGSCRGHLRTNACGANLNREWAEPTAERSPEVLDVRNHMDKTGVDFVMDVHGDEAIPHVFLAGFEGIPDLDKAQDKLFRRYRNKLAKYTPDFQRHYGYENDEPGQANLALATNQLAYRYKAVSMTLEMPFKDHDDMPDLKKGWSPERSKQLGRDCLAILAEMIDQLPISGKDLA</sequence>
<name>Y1242_ZYMMO</name>
<reference key="1">
    <citation type="journal article" date="1993" name="J. Bacteriol.">
        <title>Cloning, sequencing, and expression of the Zymomonas mobilis phosphoglycerate mutase gene (pgm) in Escherichia coli.</title>
        <authorList>
            <person name="Yomano L.P."/>
            <person name="Scopes R.K."/>
            <person name="Ingram L.O."/>
        </authorList>
    </citation>
    <scope>NUCLEOTIDE SEQUENCE [GENOMIC DNA]</scope>
    <source>
        <strain>ATCC 31821 / ZM4 / CP4</strain>
    </source>
</reference>
<reference key="2">
    <citation type="journal article" date="2005" name="Nat. Biotechnol.">
        <title>The genome sequence of the ethanologenic bacterium Zymomonas mobilis ZM4.</title>
        <authorList>
            <person name="Seo J.-S."/>
            <person name="Chong H."/>
            <person name="Park H.S."/>
            <person name="Yoon K.-O."/>
            <person name="Jung C."/>
            <person name="Kim J.J."/>
            <person name="Hong J.H."/>
            <person name="Kim H."/>
            <person name="Kim J.-H."/>
            <person name="Kil J.-I."/>
            <person name="Park C.J."/>
            <person name="Oh H.-M."/>
            <person name="Lee J.-S."/>
            <person name="Jin S.-J."/>
            <person name="Um H.-W."/>
            <person name="Lee H.-J."/>
            <person name="Oh S.-J."/>
            <person name="Kim J.Y."/>
            <person name="Kang H.L."/>
            <person name="Lee S.Y."/>
            <person name="Lee K.J."/>
            <person name="Kang H.S."/>
        </authorList>
    </citation>
    <scope>NUCLEOTIDE SEQUENCE [LARGE SCALE GENOMIC DNA]</scope>
    <source>
        <strain>ATCC 31821 / ZM4 / CP4</strain>
    </source>
</reference>
<organism>
    <name type="scientific">Zymomonas mobilis subsp. mobilis (strain ATCC 31821 / ZM4 / CP4)</name>
    <dbReference type="NCBI Taxonomy" id="264203"/>
    <lineage>
        <taxon>Bacteria</taxon>
        <taxon>Pseudomonadati</taxon>
        <taxon>Pseudomonadota</taxon>
        <taxon>Alphaproteobacteria</taxon>
        <taxon>Sphingomonadales</taxon>
        <taxon>Zymomonadaceae</taxon>
        <taxon>Zymomonas</taxon>
    </lineage>
</organism>
<protein>
    <recommendedName>
        <fullName>Uncharacterized protein ZMO1242</fullName>
    </recommendedName>
</protein>
<proteinExistence type="predicted"/>
<feature type="chain" id="PRO_0000066064" description="Uncharacterized protein ZMO1242">
    <location>
        <begin position="1"/>
        <end position="380"/>
    </location>
</feature>
<feature type="domain" description="Peptidase M14" evidence="1">
    <location>
        <begin position="111"/>
        <end position="369"/>
    </location>
</feature>
<feature type="active site" description="Proton donor/acceptor" evidence="1">
    <location>
        <position position="333"/>
    </location>
</feature>
<feature type="binding site" evidence="1">
    <location>
        <position position="164"/>
    </location>
    <ligand>
        <name>Zn(2+)</name>
        <dbReference type="ChEBI" id="CHEBI:29105"/>
        <note>catalytic</note>
    </ligand>
</feature>
<feature type="binding site" evidence="1">
    <location>
        <position position="167"/>
    </location>
    <ligand>
        <name>Zn(2+)</name>
        <dbReference type="ChEBI" id="CHEBI:29105"/>
        <note>catalytic</note>
    </ligand>
</feature>
<feature type="binding site" evidence="1">
    <location>
        <position position="257"/>
    </location>
    <ligand>
        <name>Zn(2+)</name>
        <dbReference type="ChEBI" id="CHEBI:29105"/>
        <note>catalytic</note>
    </ligand>
</feature>
<feature type="sequence conflict" description="In Ref. 1; AAA71931." evidence="2" ref="1">
    <original>F</original>
    <variation>L</variation>
    <location>
        <position position="36"/>
    </location>
</feature>
<feature type="sequence conflict" description="In Ref. 1; AAA71931." evidence="2" ref="1">
    <original>V</original>
    <variation>I</variation>
    <location>
        <position position="56"/>
    </location>
</feature>
<feature type="sequence conflict" description="In Ref. 1; AAA71931." evidence="2" ref="1">
    <original>P</original>
    <variation>A</variation>
    <location>
        <position position="65"/>
    </location>
</feature>
<feature type="sequence conflict" description="In Ref. 1; AAA71931." evidence="2" ref="1">
    <original>V</original>
    <variation>L</variation>
    <location>
        <position position="75"/>
    </location>
</feature>
<feature type="sequence conflict" description="In Ref. 1; AAA71931." evidence="2" ref="1">
    <original>M</original>
    <variation>V</variation>
    <location>
        <position position="201"/>
    </location>
</feature>
<feature type="sequence conflict" description="In Ref. 1; AAA71931." evidence="2" ref="1">
    <original>D</original>
    <variation>A</variation>
    <location>
        <position position="240"/>
    </location>
</feature>
<feature type="sequence conflict" description="In Ref. 1; AAA71931." evidence="2" ref="1">
    <original>E</original>
    <variation>A</variation>
    <location>
        <position position="352"/>
    </location>
</feature>
<comment type="cofactor">
    <cofactor evidence="1">
        <name>Zn(2+)</name>
        <dbReference type="ChEBI" id="CHEBI:29105"/>
    </cofactor>
</comment>
<evidence type="ECO:0000255" key="1">
    <source>
        <dbReference type="PROSITE-ProRule" id="PRU01379"/>
    </source>
</evidence>
<evidence type="ECO:0000305" key="2"/>